<feature type="chain" id="PRO_0000302630" description="ATP synthase subunit alpha">
    <location>
        <begin position="1"/>
        <end position="509"/>
    </location>
</feature>
<feature type="binding site" evidence="2">
    <location>
        <begin position="169"/>
        <end position="176"/>
    </location>
    <ligand>
        <name>ATP</name>
        <dbReference type="ChEBI" id="CHEBI:30616"/>
    </ligand>
</feature>
<feature type="site" description="Required for activity" evidence="2">
    <location>
        <position position="370"/>
    </location>
</feature>
<gene>
    <name evidence="2" type="primary">atpA</name>
    <name type="ordered locus">BBta_0406</name>
</gene>
<reference key="1">
    <citation type="journal article" date="2007" name="Science">
        <title>Legumes symbioses: absence of nod genes in photosynthetic bradyrhizobia.</title>
        <authorList>
            <person name="Giraud E."/>
            <person name="Moulin L."/>
            <person name="Vallenet D."/>
            <person name="Barbe V."/>
            <person name="Cytryn E."/>
            <person name="Avarre J.-C."/>
            <person name="Jaubert M."/>
            <person name="Simon D."/>
            <person name="Cartieaux F."/>
            <person name="Prin Y."/>
            <person name="Bena G."/>
            <person name="Hannibal L."/>
            <person name="Fardoux J."/>
            <person name="Kojadinovic M."/>
            <person name="Vuillet L."/>
            <person name="Lajus A."/>
            <person name="Cruveiller S."/>
            <person name="Rouy Z."/>
            <person name="Mangenot S."/>
            <person name="Segurens B."/>
            <person name="Dossat C."/>
            <person name="Franck W.L."/>
            <person name="Chang W.-S."/>
            <person name="Saunders E."/>
            <person name="Bruce D."/>
            <person name="Richardson P."/>
            <person name="Normand P."/>
            <person name="Dreyfus B."/>
            <person name="Pignol D."/>
            <person name="Stacey G."/>
            <person name="Emerich D."/>
            <person name="Vermeglio A."/>
            <person name="Medigue C."/>
            <person name="Sadowsky M."/>
        </authorList>
    </citation>
    <scope>NUCLEOTIDE SEQUENCE [LARGE SCALE GENOMIC DNA]</scope>
    <source>
        <strain>BTAi1 / ATCC BAA-1182</strain>
    </source>
</reference>
<organism>
    <name type="scientific">Bradyrhizobium sp. (strain BTAi1 / ATCC BAA-1182)</name>
    <dbReference type="NCBI Taxonomy" id="288000"/>
    <lineage>
        <taxon>Bacteria</taxon>
        <taxon>Pseudomonadati</taxon>
        <taxon>Pseudomonadota</taxon>
        <taxon>Alphaproteobacteria</taxon>
        <taxon>Hyphomicrobiales</taxon>
        <taxon>Nitrobacteraceae</taxon>
        <taxon>Bradyrhizobium</taxon>
    </lineage>
</organism>
<accession>A5E948</accession>
<evidence type="ECO:0000250" key="1"/>
<evidence type="ECO:0000255" key="2">
    <source>
        <dbReference type="HAMAP-Rule" id="MF_01346"/>
    </source>
</evidence>
<comment type="function">
    <text evidence="2">Produces ATP from ADP in the presence of a proton gradient across the membrane. The alpha chain is a regulatory subunit.</text>
</comment>
<comment type="catalytic activity">
    <reaction evidence="2">
        <text>ATP + H2O + 4 H(+)(in) = ADP + phosphate + 5 H(+)(out)</text>
        <dbReference type="Rhea" id="RHEA:57720"/>
        <dbReference type="ChEBI" id="CHEBI:15377"/>
        <dbReference type="ChEBI" id="CHEBI:15378"/>
        <dbReference type="ChEBI" id="CHEBI:30616"/>
        <dbReference type="ChEBI" id="CHEBI:43474"/>
        <dbReference type="ChEBI" id="CHEBI:456216"/>
        <dbReference type="EC" id="7.1.2.2"/>
    </reaction>
</comment>
<comment type="subunit">
    <text evidence="1">F-type ATPases have 2 components, CF(1) - the catalytic core - and CF(0) - the membrane proton channel. CF(1) has five subunits: alpha(3), beta(3), gamma(1), delta(1), epsilon(1). CF(0) has four main subunits: a(1), b(1), b'(1) and c(9-12) (By similarity).</text>
</comment>
<comment type="subcellular location">
    <subcellularLocation>
        <location evidence="2">Cell inner membrane</location>
        <topology evidence="2">Peripheral membrane protein</topology>
    </subcellularLocation>
</comment>
<comment type="similarity">
    <text evidence="2">Belongs to the ATPase alpha/beta chains family.</text>
</comment>
<keyword id="KW-0066">ATP synthesis</keyword>
<keyword id="KW-0067">ATP-binding</keyword>
<keyword id="KW-0997">Cell inner membrane</keyword>
<keyword id="KW-1003">Cell membrane</keyword>
<keyword id="KW-0139">CF(1)</keyword>
<keyword id="KW-0375">Hydrogen ion transport</keyword>
<keyword id="KW-0406">Ion transport</keyword>
<keyword id="KW-0472">Membrane</keyword>
<keyword id="KW-0547">Nucleotide-binding</keyword>
<keyword id="KW-1185">Reference proteome</keyword>
<keyword id="KW-1278">Translocase</keyword>
<keyword id="KW-0813">Transport</keyword>
<dbReference type="EC" id="7.1.2.2" evidence="2"/>
<dbReference type="EMBL" id="CP000494">
    <property type="protein sequence ID" value="ABQ32692.1"/>
    <property type="molecule type" value="Genomic_DNA"/>
</dbReference>
<dbReference type="RefSeq" id="WP_012040745.1">
    <property type="nucleotide sequence ID" value="NC_009485.1"/>
</dbReference>
<dbReference type="SMR" id="A5E948"/>
<dbReference type="STRING" id="288000.BBta_0406"/>
<dbReference type="KEGG" id="bbt:BBta_0406"/>
<dbReference type="eggNOG" id="COG0056">
    <property type="taxonomic scope" value="Bacteria"/>
</dbReference>
<dbReference type="HOGENOM" id="CLU_010091_2_1_5"/>
<dbReference type="OrthoDB" id="9803053at2"/>
<dbReference type="Proteomes" id="UP000000246">
    <property type="component" value="Chromosome"/>
</dbReference>
<dbReference type="GO" id="GO:0005886">
    <property type="term" value="C:plasma membrane"/>
    <property type="evidence" value="ECO:0007669"/>
    <property type="project" value="UniProtKB-SubCell"/>
</dbReference>
<dbReference type="GO" id="GO:0045259">
    <property type="term" value="C:proton-transporting ATP synthase complex"/>
    <property type="evidence" value="ECO:0007669"/>
    <property type="project" value="UniProtKB-KW"/>
</dbReference>
<dbReference type="GO" id="GO:0043531">
    <property type="term" value="F:ADP binding"/>
    <property type="evidence" value="ECO:0007669"/>
    <property type="project" value="TreeGrafter"/>
</dbReference>
<dbReference type="GO" id="GO:0005524">
    <property type="term" value="F:ATP binding"/>
    <property type="evidence" value="ECO:0007669"/>
    <property type="project" value="UniProtKB-UniRule"/>
</dbReference>
<dbReference type="GO" id="GO:0046933">
    <property type="term" value="F:proton-transporting ATP synthase activity, rotational mechanism"/>
    <property type="evidence" value="ECO:0007669"/>
    <property type="project" value="UniProtKB-UniRule"/>
</dbReference>
<dbReference type="CDD" id="cd18113">
    <property type="entry name" value="ATP-synt_F1_alpha_C"/>
    <property type="match status" value="1"/>
</dbReference>
<dbReference type="CDD" id="cd18116">
    <property type="entry name" value="ATP-synt_F1_alpha_N"/>
    <property type="match status" value="1"/>
</dbReference>
<dbReference type="CDD" id="cd01132">
    <property type="entry name" value="F1-ATPase_alpha_CD"/>
    <property type="match status" value="1"/>
</dbReference>
<dbReference type="FunFam" id="1.20.150.20:FF:000001">
    <property type="entry name" value="ATP synthase subunit alpha"/>
    <property type="match status" value="1"/>
</dbReference>
<dbReference type="FunFam" id="2.40.30.20:FF:000001">
    <property type="entry name" value="ATP synthase subunit alpha"/>
    <property type="match status" value="1"/>
</dbReference>
<dbReference type="FunFam" id="3.40.50.300:FF:002432">
    <property type="entry name" value="ATP synthase subunit alpha, mitochondrial"/>
    <property type="match status" value="1"/>
</dbReference>
<dbReference type="Gene3D" id="2.40.30.20">
    <property type="match status" value="1"/>
</dbReference>
<dbReference type="Gene3D" id="1.20.150.20">
    <property type="entry name" value="ATP synthase alpha/beta chain, C-terminal domain"/>
    <property type="match status" value="1"/>
</dbReference>
<dbReference type="Gene3D" id="3.40.50.300">
    <property type="entry name" value="P-loop containing nucleotide triphosphate hydrolases"/>
    <property type="match status" value="1"/>
</dbReference>
<dbReference type="HAMAP" id="MF_01346">
    <property type="entry name" value="ATP_synth_alpha_bact"/>
    <property type="match status" value="1"/>
</dbReference>
<dbReference type="InterPro" id="IPR023366">
    <property type="entry name" value="ATP_synth_asu-like_sf"/>
</dbReference>
<dbReference type="InterPro" id="IPR000793">
    <property type="entry name" value="ATP_synth_asu_C"/>
</dbReference>
<dbReference type="InterPro" id="IPR038376">
    <property type="entry name" value="ATP_synth_asu_C_sf"/>
</dbReference>
<dbReference type="InterPro" id="IPR033732">
    <property type="entry name" value="ATP_synth_F1_a_nt-bd_dom"/>
</dbReference>
<dbReference type="InterPro" id="IPR005294">
    <property type="entry name" value="ATP_synth_F1_asu"/>
</dbReference>
<dbReference type="InterPro" id="IPR020003">
    <property type="entry name" value="ATPase_a/bsu_AS"/>
</dbReference>
<dbReference type="InterPro" id="IPR004100">
    <property type="entry name" value="ATPase_F1/V1/A1_a/bsu_N"/>
</dbReference>
<dbReference type="InterPro" id="IPR036121">
    <property type="entry name" value="ATPase_F1/V1/A1_a/bsu_N_sf"/>
</dbReference>
<dbReference type="InterPro" id="IPR000194">
    <property type="entry name" value="ATPase_F1/V1/A1_a/bsu_nucl-bd"/>
</dbReference>
<dbReference type="InterPro" id="IPR027417">
    <property type="entry name" value="P-loop_NTPase"/>
</dbReference>
<dbReference type="NCBIfam" id="TIGR00962">
    <property type="entry name" value="atpA"/>
    <property type="match status" value="1"/>
</dbReference>
<dbReference type="NCBIfam" id="NF009884">
    <property type="entry name" value="PRK13343.1"/>
    <property type="match status" value="1"/>
</dbReference>
<dbReference type="PANTHER" id="PTHR48082">
    <property type="entry name" value="ATP SYNTHASE SUBUNIT ALPHA, MITOCHONDRIAL"/>
    <property type="match status" value="1"/>
</dbReference>
<dbReference type="PANTHER" id="PTHR48082:SF2">
    <property type="entry name" value="ATP SYNTHASE SUBUNIT ALPHA, MITOCHONDRIAL"/>
    <property type="match status" value="1"/>
</dbReference>
<dbReference type="Pfam" id="PF00006">
    <property type="entry name" value="ATP-synt_ab"/>
    <property type="match status" value="1"/>
</dbReference>
<dbReference type="Pfam" id="PF00306">
    <property type="entry name" value="ATP-synt_ab_C"/>
    <property type="match status" value="1"/>
</dbReference>
<dbReference type="Pfam" id="PF02874">
    <property type="entry name" value="ATP-synt_ab_N"/>
    <property type="match status" value="1"/>
</dbReference>
<dbReference type="PIRSF" id="PIRSF039088">
    <property type="entry name" value="F_ATPase_subunit_alpha"/>
    <property type="match status" value="1"/>
</dbReference>
<dbReference type="SUPFAM" id="SSF47917">
    <property type="entry name" value="C-terminal domain of alpha and beta subunits of F1 ATP synthase"/>
    <property type="match status" value="1"/>
</dbReference>
<dbReference type="SUPFAM" id="SSF50615">
    <property type="entry name" value="N-terminal domain of alpha and beta subunits of F1 ATP synthase"/>
    <property type="match status" value="1"/>
</dbReference>
<dbReference type="SUPFAM" id="SSF52540">
    <property type="entry name" value="P-loop containing nucleoside triphosphate hydrolases"/>
    <property type="match status" value="1"/>
</dbReference>
<dbReference type="PROSITE" id="PS00152">
    <property type="entry name" value="ATPASE_ALPHA_BETA"/>
    <property type="match status" value="1"/>
</dbReference>
<proteinExistence type="inferred from homology"/>
<sequence>MDIRAAEISAILKDQIKNFGQEAEVTEVGQVLSVGDGIARVYGLDNVQAGEMVEFENGTRGMALNLETDNVGVVIFGADREIKEGQTVKRTRAIVDAPVGKGLLGRVVDALGNPIDGKGPIQFTERKRVDVKAPGIIPRKSVNEPMATGLKAIDALIPIGRGQRELIIGDRQTGKTAIALDTILNQKPLNAQPDEKIKLYCVYVAVGQKRSTVAQFVKVLEEQGALEYSIVVAATASDPAPMQYLAPFTGCTMGEYFRDNGMHAVIIYDDLSKQAVAYRQMSLLLRRPPGREAYPGDVFYLHSRLLERAAKLNETQGAGSLTALPVIETQANDVSAYIPTNVISITDGQIFLETDLFFQGIRPAVNVGLSVSRVGSSAQTKAMKKVAGKIKGELAQYREMAAFAQFGSDLDAATQRLLNRGSRLTELLKQPQFSPLKMEEQVCVIWAGTNGYLDALPLGKVRAFEDGLLSLLRGKHADLLNTIRDTRDLSDDSAAKLKAAVEGFAKTFS</sequence>
<name>ATPA_BRASB</name>
<protein>
    <recommendedName>
        <fullName evidence="2">ATP synthase subunit alpha</fullName>
        <ecNumber evidence="2">7.1.2.2</ecNumber>
    </recommendedName>
    <alternativeName>
        <fullName evidence="2">ATP synthase F1 sector subunit alpha</fullName>
    </alternativeName>
    <alternativeName>
        <fullName evidence="2">F-ATPase subunit alpha</fullName>
    </alternativeName>
</protein>